<protein>
    <recommendedName>
        <fullName evidence="1">Protease HtpX homolog</fullName>
        <ecNumber evidence="1">3.4.24.-</ecNumber>
    </recommendedName>
</protein>
<evidence type="ECO:0000255" key="1">
    <source>
        <dbReference type="HAMAP-Rule" id="MF_00188"/>
    </source>
</evidence>
<accession>O30004</accession>
<keyword id="KW-1003">Cell membrane</keyword>
<keyword id="KW-0378">Hydrolase</keyword>
<keyword id="KW-0472">Membrane</keyword>
<keyword id="KW-0479">Metal-binding</keyword>
<keyword id="KW-0482">Metalloprotease</keyword>
<keyword id="KW-0645">Protease</keyword>
<keyword id="KW-1185">Reference proteome</keyword>
<keyword id="KW-0812">Transmembrane</keyword>
<keyword id="KW-1133">Transmembrane helix</keyword>
<keyword id="KW-0862">Zinc</keyword>
<organism>
    <name type="scientific">Archaeoglobus fulgidus (strain ATCC 49558 / DSM 4304 / JCM 9628 / NBRC 100126 / VC-16)</name>
    <dbReference type="NCBI Taxonomy" id="224325"/>
    <lineage>
        <taxon>Archaea</taxon>
        <taxon>Methanobacteriati</taxon>
        <taxon>Methanobacteriota</taxon>
        <taxon>Archaeoglobi</taxon>
        <taxon>Archaeoglobales</taxon>
        <taxon>Archaeoglobaceae</taxon>
        <taxon>Archaeoglobus</taxon>
    </lineage>
</organism>
<proteinExistence type="inferred from homology"/>
<gene>
    <name evidence="1" type="primary">htpX</name>
    <name type="ordered locus">AF_0235</name>
</gene>
<reference key="1">
    <citation type="journal article" date="1997" name="Nature">
        <title>The complete genome sequence of the hyperthermophilic, sulphate-reducing archaeon Archaeoglobus fulgidus.</title>
        <authorList>
            <person name="Klenk H.-P."/>
            <person name="Clayton R.A."/>
            <person name="Tomb J.-F."/>
            <person name="White O."/>
            <person name="Nelson K.E."/>
            <person name="Ketchum K.A."/>
            <person name="Dodson R.J."/>
            <person name="Gwinn M.L."/>
            <person name="Hickey E.K."/>
            <person name="Peterson J.D."/>
            <person name="Richardson D.L."/>
            <person name="Kerlavage A.R."/>
            <person name="Graham D.E."/>
            <person name="Kyrpides N.C."/>
            <person name="Fleischmann R.D."/>
            <person name="Quackenbush J."/>
            <person name="Lee N.H."/>
            <person name="Sutton G.G."/>
            <person name="Gill S.R."/>
            <person name="Kirkness E.F."/>
            <person name="Dougherty B.A."/>
            <person name="McKenney K."/>
            <person name="Adams M.D."/>
            <person name="Loftus B.J."/>
            <person name="Peterson S.N."/>
            <person name="Reich C.I."/>
            <person name="McNeil L.K."/>
            <person name="Badger J.H."/>
            <person name="Glodek A."/>
            <person name="Zhou L."/>
            <person name="Overbeek R."/>
            <person name="Gocayne J.D."/>
            <person name="Weidman J.F."/>
            <person name="McDonald L.A."/>
            <person name="Utterback T.R."/>
            <person name="Cotton M.D."/>
            <person name="Spriggs T."/>
            <person name="Artiach P."/>
            <person name="Kaine B.P."/>
            <person name="Sykes S.M."/>
            <person name="Sadow P.W."/>
            <person name="D'Andrea K.P."/>
            <person name="Bowman C."/>
            <person name="Fujii C."/>
            <person name="Garland S.A."/>
            <person name="Mason T.M."/>
            <person name="Olsen G.J."/>
            <person name="Fraser C.M."/>
            <person name="Smith H.O."/>
            <person name="Woese C.R."/>
            <person name="Venter J.C."/>
        </authorList>
    </citation>
    <scope>NUCLEOTIDE SEQUENCE [LARGE SCALE GENOMIC DNA]</scope>
    <source>
        <strain>ATCC 49558 / DSM 4304 / JCM 9628 / NBRC 100126 / VC-16</strain>
    </source>
</reference>
<sequence>MMLYFFDPVYMMLAVLGYFVMLLLASTIAPKVASRVSGKFSLFTSMVLLAGMILAISAAIIYLILAYAGVYISFYGLIIFLLIINLLMYLLSPYIINLSYGAQRDERLQMVVNSVARRLNVKPPKAVVVRSPPNAFAYGNFLTGKFVAVSESLMRMLSQEELEAVIGHEIGHHKHRDNAVMLLFGLLPSVIFYLGYALLHSSMRDDRRGAQLAAIGIAAVIVSFIVQILVLAFSRLREYYADFEGVRATNKDAMQRSLAKIHLFYHRYPDYLAPIQDSKFRTLFIYAFTNAVAEPITRADIEALKNMKVSPIQEFLSTHPPLPKRLRFIESIRVF</sequence>
<dbReference type="EC" id="3.4.24.-" evidence="1"/>
<dbReference type="EMBL" id="AE000782">
    <property type="protein sequence ID" value="AAB90998.1"/>
    <property type="molecule type" value="Genomic_DNA"/>
</dbReference>
<dbReference type="PIR" id="C69279">
    <property type="entry name" value="C69279"/>
</dbReference>
<dbReference type="STRING" id="224325.AF_0235"/>
<dbReference type="PaxDb" id="224325-AF_0235"/>
<dbReference type="EnsemblBacteria" id="AAB90998">
    <property type="protein sequence ID" value="AAB90998"/>
    <property type="gene ID" value="AF_0235"/>
</dbReference>
<dbReference type="KEGG" id="afu:AF_0235"/>
<dbReference type="eggNOG" id="arCOG01331">
    <property type="taxonomic scope" value="Archaea"/>
</dbReference>
<dbReference type="HOGENOM" id="CLU_042266_4_2_2"/>
<dbReference type="OrthoDB" id="28389at2157"/>
<dbReference type="PhylomeDB" id="O30004"/>
<dbReference type="Proteomes" id="UP000002199">
    <property type="component" value="Chromosome"/>
</dbReference>
<dbReference type="GO" id="GO:0005886">
    <property type="term" value="C:plasma membrane"/>
    <property type="evidence" value="ECO:0007669"/>
    <property type="project" value="UniProtKB-SubCell"/>
</dbReference>
<dbReference type="GO" id="GO:0004222">
    <property type="term" value="F:metalloendopeptidase activity"/>
    <property type="evidence" value="ECO:0007669"/>
    <property type="project" value="UniProtKB-UniRule"/>
</dbReference>
<dbReference type="GO" id="GO:0008270">
    <property type="term" value="F:zinc ion binding"/>
    <property type="evidence" value="ECO:0007669"/>
    <property type="project" value="UniProtKB-UniRule"/>
</dbReference>
<dbReference type="GO" id="GO:0006508">
    <property type="term" value="P:proteolysis"/>
    <property type="evidence" value="ECO:0007669"/>
    <property type="project" value="UniProtKB-KW"/>
</dbReference>
<dbReference type="CDD" id="cd07338">
    <property type="entry name" value="M48B_HtpX_like"/>
    <property type="match status" value="1"/>
</dbReference>
<dbReference type="Gene3D" id="3.30.2010.10">
    <property type="entry name" value="Metalloproteases ('zincins'), catalytic domain"/>
    <property type="match status" value="1"/>
</dbReference>
<dbReference type="HAMAP" id="MF_00188">
    <property type="entry name" value="Pept_M48_protease_HtpX"/>
    <property type="match status" value="1"/>
</dbReference>
<dbReference type="InterPro" id="IPR050083">
    <property type="entry name" value="HtpX_protease"/>
</dbReference>
<dbReference type="InterPro" id="IPR022919">
    <property type="entry name" value="Pept_M48_protease_HtpX"/>
</dbReference>
<dbReference type="InterPro" id="IPR001915">
    <property type="entry name" value="Peptidase_M48"/>
</dbReference>
<dbReference type="PANTHER" id="PTHR43221">
    <property type="entry name" value="PROTEASE HTPX"/>
    <property type="match status" value="1"/>
</dbReference>
<dbReference type="PANTHER" id="PTHR43221:SF2">
    <property type="entry name" value="PROTEASE HTPX HOMOLOG"/>
    <property type="match status" value="1"/>
</dbReference>
<dbReference type="Pfam" id="PF01435">
    <property type="entry name" value="Peptidase_M48"/>
    <property type="match status" value="1"/>
</dbReference>
<feature type="chain" id="PRO_0000138913" description="Protease HtpX homolog">
    <location>
        <begin position="1"/>
        <end position="335"/>
    </location>
</feature>
<feature type="transmembrane region" description="Helical" evidence="1">
    <location>
        <begin position="9"/>
        <end position="29"/>
    </location>
</feature>
<feature type="transmembrane region" description="Helical" evidence="1">
    <location>
        <begin position="42"/>
        <end position="62"/>
    </location>
</feature>
<feature type="transmembrane region" description="Helical" evidence="1">
    <location>
        <begin position="64"/>
        <end position="84"/>
    </location>
</feature>
<feature type="transmembrane region" description="Helical" evidence="1">
    <location>
        <begin position="179"/>
        <end position="199"/>
    </location>
</feature>
<feature type="transmembrane region" description="Helical" evidence="1">
    <location>
        <begin position="213"/>
        <end position="233"/>
    </location>
</feature>
<feature type="active site" evidence="1">
    <location>
        <position position="169"/>
    </location>
</feature>
<feature type="binding site" evidence="1">
    <location>
        <position position="168"/>
    </location>
    <ligand>
        <name>Zn(2+)</name>
        <dbReference type="ChEBI" id="CHEBI:29105"/>
        <note>catalytic</note>
    </ligand>
</feature>
<feature type="binding site" evidence="1">
    <location>
        <position position="172"/>
    </location>
    <ligand>
        <name>Zn(2+)</name>
        <dbReference type="ChEBI" id="CHEBI:29105"/>
        <note>catalytic</note>
    </ligand>
</feature>
<feature type="binding site" evidence="1">
    <location>
        <position position="238"/>
    </location>
    <ligand>
        <name>Zn(2+)</name>
        <dbReference type="ChEBI" id="CHEBI:29105"/>
        <note>catalytic</note>
    </ligand>
</feature>
<name>HTPX_ARCFU</name>
<comment type="cofactor">
    <cofactor evidence="1">
        <name>Zn(2+)</name>
        <dbReference type="ChEBI" id="CHEBI:29105"/>
    </cofactor>
    <text evidence="1">Binds 1 zinc ion per subunit.</text>
</comment>
<comment type="subcellular location">
    <subcellularLocation>
        <location evidence="1">Cell membrane</location>
        <topology evidence="1">Multi-pass membrane protein</topology>
    </subcellularLocation>
</comment>
<comment type="similarity">
    <text evidence="1">Belongs to the peptidase M48B family.</text>
</comment>